<accession>P20098</accession>
<protein>
    <recommendedName>
        <fullName evidence="1">Transcriptional regulatory protein RcsA</fullName>
    </recommendedName>
</protein>
<reference key="1">
    <citation type="journal article" date="1990" name="J. Gen. Microbiol.">
        <title>Molecular cloning, expression and nucleotide sequence of the rcsA gene of Erwinia amylovora, encoding a positive regulator of capsule expression: evidence for a family of related capsule activator proteins.</title>
        <authorList>
            <person name="Coleman M."/>
            <person name="Pearce R."/>
            <person name="Hitchin E."/>
            <person name="Busfield F."/>
            <person name="Mansfield J.W."/>
            <person name="Roberts I.S."/>
        </authorList>
    </citation>
    <scope>NUCLEOTIDE SEQUENCE [GENOMIC DNA]</scope>
    <source>
        <strain>T</strain>
    </source>
</reference>
<comment type="function">
    <text evidence="1">Component of the Rcs signaling system, which controls transcription of numerous genes. Binds to DNA to regulate expression of genes.</text>
</comment>
<comment type="similarity">
    <text evidence="1">Belongs to the RcsA family.</text>
</comment>
<organism>
    <name type="scientific">Erwinia amylovora</name>
    <name type="common">Fire blight bacteria</name>
    <dbReference type="NCBI Taxonomy" id="552"/>
    <lineage>
        <taxon>Bacteria</taxon>
        <taxon>Pseudomonadati</taxon>
        <taxon>Pseudomonadota</taxon>
        <taxon>Gammaproteobacteria</taxon>
        <taxon>Enterobacterales</taxon>
        <taxon>Erwiniaceae</taxon>
        <taxon>Erwinia</taxon>
    </lineage>
</organism>
<name>RCSA_ERWAM</name>
<keyword id="KW-0238">DNA-binding</keyword>
<keyword id="KW-0716">Sensory transduction</keyword>
<keyword id="KW-0804">Transcription</keyword>
<keyword id="KW-0805">Transcription regulation</keyword>
<sequence>MPTIIMDSCNYTRLGLTEYMTVKGVKKKNISLINDIAQLQNKCQQLKPGVVLINEDCFIHESDASERIRKIILQHPDTLFFIFMAISNIHFEEYLYVRNNLIITSKAIKISTLDSLLNGYFQKKLNLSVRHGTHSEVHPFTLSQTESNMLKMWMSGHDTIQISDKMQIKAKTVSSHKGNIKRKIKTHNKQVIYHVVRLTDNVTSGIYVNER</sequence>
<gene>
    <name evidence="1" type="primary">rcsA</name>
</gene>
<feature type="chain" id="PRO_0000184182" description="Transcriptional regulatory protein RcsA">
    <location>
        <begin position="1"/>
        <end position="211"/>
    </location>
</feature>
<feature type="domain" description="HTH luxR-type" evidence="1">
    <location>
        <begin position="135"/>
        <end position="200"/>
    </location>
</feature>
<feature type="DNA-binding region" description="H-T-H motif" evidence="1">
    <location>
        <begin position="159"/>
        <end position="178"/>
    </location>
</feature>
<proteinExistence type="inferred from homology"/>
<dbReference type="EMBL" id="M57387">
    <property type="protein sequence ID" value="AAA24864.1"/>
    <property type="molecule type" value="Genomic_DNA"/>
</dbReference>
<dbReference type="SMR" id="P20098"/>
<dbReference type="PHI-base" id="PHI:4478"/>
<dbReference type="GO" id="GO:0003677">
    <property type="term" value="F:DNA binding"/>
    <property type="evidence" value="ECO:0007669"/>
    <property type="project" value="UniProtKB-UniRule"/>
</dbReference>
<dbReference type="GO" id="GO:0006355">
    <property type="term" value="P:regulation of DNA-templated transcription"/>
    <property type="evidence" value="ECO:0007669"/>
    <property type="project" value="UniProtKB-UniRule"/>
</dbReference>
<dbReference type="CDD" id="cd06170">
    <property type="entry name" value="LuxR_C_like"/>
    <property type="match status" value="1"/>
</dbReference>
<dbReference type="Gene3D" id="1.10.10.10">
    <property type="entry name" value="Winged helix-like DNA-binding domain superfamily/Winged helix DNA-binding domain"/>
    <property type="match status" value="1"/>
</dbReference>
<dbReference type="HAMAP" id="MF_00982">
    <property type="entry name" value="RcsA"/>
    <property type="match status" value="1"/>
</dbReference>
<dbReference type="InterPro" id="IPR030866">
    <property type="entry name" value="RcsA"/>
</dbReference>
<dbReference type="InterPro" id="IPR016032">
    <property type="entry name" value="Sig_transdc_resp-reg_C-effctor"/>
</dbReference>
<dbReference type="InterPro" id="IPR000792">
    <property type="entry name" value="Tscrpt_reg_LuxR_C"/>
</dbReference>
<dbReference type="InterPro" id="IPR036388">
    <property type="entry name" value="WH-like_DNA-bd_sf"/>
</dbReference>
<dbReference type="NCBIfam" id="NF011940">
    <property type="entry name" value="PRK15411.1"/>
    <property type="match status" value="1"/>
</dbReference>
<dbReference type="Pfam" id="PF00196">
    <property type="entry name" value="GerE"/>
    <property type="match status" value="1"/>
</dbReference>
<dbReference type="PRINTS" id="PR00038">
    <property type="entry name" value="HTHLUXR"/>
</dbReference>
<dbReference type="SMART" id="SM00421">
    <property type="entry name" value="HTH_LUXR"/>
    <property type="match status" value="1"/>
</dbReference>
<dbReference type="SUPFAM" id="SSF46894">
    <property type="entry name" value="C-terminal effector domain of the bipartite response regulators"/>
    <property type="match status" value="1"/>
</dbReference>
<dbReference type="PROSITE" id="PS00622">
    <property type="entry name" value="HTH_LUXR_1"/>
    <property type="match status" value="1"/>
</dbReference>
<dbReference type="PROSITE" id="PS50043">
    <property type="entry name" value="HTH_LUXR_2"/>
    <property type="match status" value="1"/>
</dbReference>
<evidence type="ECO:0000255" key="1">
    <source>
        <dbReference type="HAMAP-Rule" id="MF_00982"/>
    </source>
</evidence>